<proteinExistence type="evidence at transcript level"/>
<dbReference type="EMBL" id="Z73326">
    <property type="status" value="NOT_ANNOTATED_CDS"/>
    <property type="molecule type" value="Genomic_DNA"/>
</dbReference>
<dbReference type="EMBL" id="BK006945">
    <property type="protein sequence ID" value="DAA09467.1"/>
    <property type="molecule type" value="Genomic_DNA"/>
</dbReference>
<dbReference type="RefSeq" id="NP_878121.1">
    <property type="nucleotide sequence ID" value="NM_001184560.1"/>
</dbReference>
<dbReference type="BioGRID" id="36951">
    <property type="interactions" value="52"/>
</dbReference>
<dbReference type="FunCoup" id="Q3E813">
    <property type="interactions" value="11"/>
</dbReference>
<dbReference type="STRING" id="4932.YLR154C-G"/>
<dbReference type="PaxDb" id="4932-YLR154C-G"/>
<dbReference type="EnsemblFungi" id="YLR154C-G_mRNA">
    <property type="protein sequence ID" value="YLR154C-G"/>
    <property type="gene ID" value="YLR154C-G"/>
</dbReference>
<dbReference type="GeneID" id="1466409"/>
<dbReference type="KEGG" id="sce:YLR154C-G"/>
<dbReference type="AGR" id="SGD:S000028561"/>
<dbReference type="SGD" id="S000028561">
    <property type="gene designation" value="YLR154C-G"/>
</dbReference>
<dbReference type="VEuPathDB" id="FungiDB:YLR154C-G"/>
<dbReference type="HOGENOM" id="CLU_3144071_0_0_1"/>
<dbReference type="InParanoid" id="Q3E813"/>
<dbReference type="BioCyc" id="YEAST:G3O-32575-MONOMER"/>
<dbReference type="PRO" id="PR:Q3E813"/>
<dbReference type="Proteomes" id="UP000002311">
    <property type="component" value="Chromosome XII"/>
</dbReference>
<sequence length="49" mass="6045">MWRRRREPWEELSFLLNSLSPRNWFIRRWGLMAGRGQHLCWLRCACDGP</sequence>
<accession>Q3E813</accession>
<accession>D6VYF1</accession>
<feature type="chain" id="PRO_0000262876" description="Uncharacterized protein YLR154C-G">
    <location>
        <begin position="1"/>
        <end position="49"/>
    </location>
</feature>
<protein>
    <recommendedName>
        <fullName>Uncharacterized protein YLR154C-G</fullName>
    </recommendedName>
</protein>
<reference key="1">
    <citation type="journal article" date="1997" name="Nature">
        <title>The nucleotide sequence of Saccharomyces cerevisiae chromosome XII.</title>
        <authorList>
            <person name="Johnston M."/>
            <person name="Hillier L.W."/>
            <person name="Riles L."/>
            <person name="Albermann K."/>
            <person name="Andre B."/>
            <person name="Ansorge W."/>
            <person name="Benes V."/>
            <person name="Brueckner M."/>
            <person name="Delius H."/>
            <person name="Dubois E."/>
            <person name="Duesterhoeft A."/>
            <person name="Entian K.-D."/>
            <person name="Floeth M."/>
            <person name="Goffeau A."/>
            <person name="Hebling U."/>
            <person name="Heumann K."/>
            <person name="Heuss-Neitzel D."/>
            <person name="Hilbert H."/>
            <person name="Hilger F."/>
            <person name="Kleine K."/>
            <person name="Koetter P."/>
            <person name="Louis E.J."/>
            <person name="Messenguy F."/>
            <person name="Mewes H.-W."/>
            <person name="Miosga T."/>
            <person name="Moestl D."/>
            <person name="Mueller-Auer S."/>
            <person name="Nentwich U."/>
            <person name="Obermaier B."/>
            <person name="Piravandi E."/>
            <person name="Pohl T.M."/>
            <person name="Portetelle D."/>
            <person name="Purnelle B."/>
            <person name="Rechmann S."/>
            <person name="Rieger M."/>
            <person name="Rinke M."/>
            <person name="Rose M."/>
            <person name="Scharfe M."/>
            <person name="Scherens B."/>
            <person name="Scholler P."/>
            <person name="Schwager C."/>
            <person name="Schwarz S."/>
            <person name="Underwood A.P."/>
            <person name="Urrestarazu L.A."/>
            <person name="Vandenbol M."/>
            <person name="Verhasselt P."/>
            <person name="Vierendeels F."/>
            <person name="Voet M."/>
            <person name="Volckaert G."/>
            <person name="Voss H."/>
            <person name="Wambutt R."/>
            <person name="Wedler E."/>
            <person name="Wedler H."/>
            <person name="Zimmermann F.K."/>
            <person name="Zollner A."/>
            <person name="Hani J."/>
            <person name="Hoheisel J.D."/>
        </authorList>
    </citation>
    <scope>NUCLEOTIDE SEQUENCE [LARGE SCALE GENOMIC DNA]</scope>
    <source>
        <strain>ATCC 204508 / S288c</strain>
    </source>
</reference>
<reference key="2">
    <citation type="journal article" date="2014" name="G3 (Bethesda)">
        <title>The reference genome sequence of Saccharomyces cerevisiae: Then and now.</title>
        <authorList>
            <person name="Engel S.R."/>
            <person name="Dietrich F.S."/>
            <person name="Fisk D.G."/>
            <person name="Binkley G."/>
            <person name="Balakrishnan R."/>
            <person name="Costanzo M.C."/>
            <person name="Dwight S.S."/>
            <person name="Hitz B.C."/>
            <person name="Karra K."/>
            <person name="Nash R.S."/>
            <person name="Weng S."/>
            <person name="Wong E.D."/>
            <person name="Lloyd P."/>
            <person name="Skrzypek M.S."/>
            <person name="Miyasato S.R."/>
            <person name="Simison M."/>
            <person name="Cherry J.M."/>
        </authorList>
    </citation>
    <scope>GENOME REANNOTATION</scope>
    <source>
        <strain>ATCC 204508 / S288c</strain>
    </source>
</reference>
<reference key="3">
    <citation type="journal article" date="2003" name="Genome Res.">
        <title>Systematic discovery of new genes in the Saccharomyces cerevisiae genome.</title>
        <authorList>
            <person name="Kessler M.M."/>
            <person name="Zeng Q."/>
            <person name="Hogan S."/>
            <person name="Cook R."/>
            <person name="Morales A.J."/>
            <person name="Cottarel G."/>
        </authorList>
    </citation>
    <scope>GENOME REANNOTATION</scope>
</reference>
<keyword id="KW-1185">Reference proteome</keyword>
<gene>
    <name type="ordered locus">YLR154C-G</name>
    <name type="ORF">smORF421</name>
</gene>
<name>YL154_YEAST</name>
<organism>
    <name type="scientific">Saccharomyces cerevisiae (strain ATCC 204508 / S288c)</name>
    <name type="common">Baker's yeast</name>
    <dbReference type="NCBI Taxonomy" id="559292"/>
    <lineage>
        <taxon>Eukaryota</taxon>
        <taxon>Fungi</taxon>
        <taxon>Dikarya</taxon>
        <taxon>Ascomycota</taxon>
        <taxon>Saccharomycotina</taxon>
        <taxon>Saccharomycetes</taxon>
        <taxon>Saccharomycetales</taxon>
        <taxon>Saccharomycetaceae</taxon>
        <taxon>Saccharomyces</taxon>
    </lineage>
</organism>